<protein>
    <recommendedName>
        <fullName>F-box/WD repeat-containing protein 9</fullName>
    </recommendedName>
    <alternativeName>
        <fullName>F-box and WD-40 domain-containing protein 9</fullName>
    </alternativeName>
</protein>
<accession>Q2T9T9</accession>
<gene>
    <name type="primary">FBXW9</name>
</gene>
<name>FBXW9_BOVIN</name>
<reference key="1">
    <citation type="submission" date="2005-12" db="EMBL/GenBank/DDBJ databases">
        <authorList>
            <consortium name="NIH - Mammalian Gene Collection (MGC) project"/>
        </authorList>
    </citation>
    <scope>NUCLEOTIDE SEQUENCE [LARGE SCALE MRNA]</scope>
    <source>
        <strain>Crossbred X Angus</strain>
        <tissue>Liver</tissue>
    </source>
</reference>
<organism>
    <name type="scientific">Bos taurus</name>
    <name type="common">Bovine</name>
    <dbReference type="NCBI Taxonomy" id="9913"/>
    <lineage>
        <taxon>Eukaryota</taxon>
        <taxon>Metazoa</taxon>
        <taxon>Chordata</taxon>
        <taxon>Craniata</taxon>
        <taxon>Vertebrata</taxon>
        <taxon>Euteleostomi</taxon>
        <taxon>Mammalia</taxon>
        <taxon>Eutheria</taxon>
        <taxon>Laurasiatheria</taxon>
        <taxon>Artiodactyla</taxon>
        <taxon>Ruminantia</taxon>
        <taxon>Pecora</taxon>
        <taxon>Bovidae</taxon>
        <taxon>Bovinae</taxon>
        <taxon>Bos</taxon>
    </lineage>
</organism>
<sequence>MELPPGPRDDPHAWDDDSDPELEPDTDAQAEAYVARLLSPPKLGLAPPRAPPLPAPTVSFGSLEPRAASKGPTVAVPGLLSLPPELLLEICAYLDARLVLHVLPRVCHALRDLVRDRVTWRLRAQRRVRAPYPVVEEEDFDWPTACIELEQHLSRWADDGRRAEYFCLADGHFASIDSVLLLQGGTLCLSGSRDRNVNLWDLQQLGVEPSRVLVKTLGTQKNSTHKGWVWSLAALDHRVCSGSWDSTVKLWDMAADGQQFGEIKGKAAVLCLSYRPDILVTGTYDKKVTVYDPRVGPALLKSRRLHSSAVLALLADDRHIISGSEDHTLVVFDRRANSVLQRLQLDSYLLCMSYQEPQLWAGDNQGLLHVFANRSGCFQLVRSFDVGHRSQITGIKHSLGALYTTSTDKTIRVHVPTDPPRTICTRSHHNVLNGICAEGNLVVAASGGLSLEVWRLQA</sequence>
<proteinExistence type="evidence at transcript level"/>
<comment type="function">
    <text evidence="1">Substrate-recognition component of the SCF (SKP1-CUL1-F-box protein)-type E3 ubiquitin ligase complex.</text>
</comment>
<comment type="subunit">
    <text evidence="1">Interacts with SKP1 and CUL1.</text>
</comment>
<keyword id="KW-0007">Acetylation</keyword>
<keyword id="KW-0597">Phosphoprotein</keyword>
<keyword id="KW-1185">Reference proteome</keyword>
<keyword id="KW-0677">Repeat</keyword>
<keyword id="KW-0833">Ubl conjugation pathway</keyword>
<keyword id="KW-0853">WD repeat</keyword>
<dbReference type="EMBL" id="BC111274">
    <property type="protein sequence ID" value="AAI11275.1"/>
    <property type="molecule type" value="mRNA"/>
</dbReference>
<dbReference type="RefSeq" id="NP_001033240.1">
    <property type="nucleotide sequence ID" value="NM_001038151.2"/>
</dbReference>
<dbReference type="SMR" id="Q2T9T9"/>
<dbReference type="FunCoup" id="Q2T9T9">
    <property type="interactions" value="1195"/>
</dbReference>
<dbReference type="STRING" id="9913.ENSBTAP00000027872"/>
<dbReference type="PaxDb" id="9913-ENSBTAP00000027872"/>
<dbReference type="GeneID" id="532538"/>
<dbReference type="KEGG" id="bta:532538"/>
<dbReference type="CTD" id="84261"/>
<dbReference type="eggNOG" id="KOG0274">
    <property type="taxonomic scope" value="Eukaryota"/>
</dbReference>
<dbReference type="InParanoid" id="Q2T9T9"/>
<dbReference type="OrthoDB" id="71437at2759"/>
<dbReference type="Proteomes" id="UP000009136">
    <property type="component" value="Unplaced"/>
</dbReference>
<dbReference type="FunFam" id="1.20.1280.50:FF:000062">
    <property type="entry name" value="F-box/WD repeat-containing protein 9 isoform X2"/>
    <property type="match status" value="1"/>
</dbReference>
<dbReference type="FunFam" id="2.130.10.10:FF:000608">
    <property type="entry name" value="F-box/WD repeat-containing protein 9 isoform X2"/>
    <property type="match status" value="1"/>
</dbReference>
<dbReference type="FunFam" id="2.130.10.10:FF:000641">
    <property type="entry name" value="F-box/WD repeat-containing protein 9 isoform X2"/>
    <property type="match status" value="1"/>
</dbReference>
<dbReference type="Gene3D" id="1.20.1280.50">
    <property type="match status" value="1"/>
</dbReference>
<dbReference type="Gene3D" id="2.130.10.10">
    <property type="entry name" value="YVTN repeat-like/Quinoprotein amine dehydrogenase"/>
    <property type="match status" value="2"/>
</dbReference>
<dbReference type="InterPro" id="IPR036047">
    <property type="entry name" value="F-box-like_dom_sf"/>
</dbReference>
<dbReference type="InterPro" id="IPR001810">
    <property type="entry name" value="F-box_dom"/>
</dbReference>
<dbReference type="InterPro" id="IPR020472">
    <property type="entry name" value="G-protein_beta_WD-40_rep"/>
</dbReference>
<dbReference type="InterPro" id="IPR015943">
    <property type="entry name" value="WD40/YVTN_repeat-like_dom_sf"/>
</dbReference>
<dbReference type="InterPro" id="IPR019775">
    <property type="entry name" value="WD40_repeat_CS"/>
</dbReference>
<dbReference type="InterPro" id="IPR036322">
    <property type="entry name" value="WD40_repeat_dom_sf"/>
</dbReference>
<dbReference type="InterPro" id="IPR001680">
    <property type="entry name" value="WD40_rpt"/>
</dbReference>
<dbReference type="PANTHER" id="PTHR19855:SF34">
    <property type="entry name" value="F-BOX_WD REPEAT-CONTAINING PROTEIN 9"/>
    <property type="match status" value="1"/>
</dbReference>
<dbReference type="PANTHER" id="PTHR19855">
    <property type="entry name" value="WD40 REPEAT PROTEIN 12, 37"/>
    <property type="match status" value="1"/>
</dbReference>
<dbReference type="Pfam" id="PF12937">
    <property type="entry name" value="F-box-like"/>
    <property type="match status" value="1"/>
</dbReference>
<dbReference type="Pfam" id="PF00400">
    <property type="entry name" value="WD40"/>
    <property type="match status" value="3"/>
</dbReference>
<dbReference type="PRINTS" id="PR00320">
    <property type="entry name" value="GPROTEINBRPT"/>
</dbReference>
<dbReference type="SMART" id="SM00256">
    <property type="entry name" value="FBOX"/>
    <property type="match status" value="1"/>
</dbReference>
<dbReference type="SMART" id="SM00320">
    <property type="entry name" value="WD40"/>
    <property type="match status" value="6"/>
</dbReference>
<dbReference type="SUPFAM" id="SSF81383">
    <property type="entry name" value="F-box domain"/>
    <property type="match status" value="1"/>
</dbReference>
<dbReference type="SUPFAM" id="SSF50978">
    <property type="entry name" value="WD40 repeat-like"/>
    <property type="match status" value="1"/>
</dbReference>
<dbReference type="PROSITE" id="PS50181">
    <property type="entry name" value="FBOX"/>
    <property type="match status" value="1"/>
</dbReference>
<dbReference type="PROSITE" id="PS00678">
    <property type="entry name" value="WD_REPEATS_1"/>
    <property type="match status" value="2"/>
</dbReference>
<dbReference type="PROSITE" id="PS50082">
    <property type="entry name" value="WD_REPEATS_2"/>
    <property type="match status" value="1"/>
</dbReference>
<dbReference type="PROSITE" id="PS50294">
    <property type="entry name" value="WD_REPEATS_REGION"/>
    <property type="match status" value="1"/>
</dbReference>
<evidence type="ECO:0000250" key="1"/>
<evidence type="ECO:0000250" key="2">
    <source>
        <dbReference type="UniProtKB" id="Q5XUX1"/>
    </source>
</evidence>
<evidence type="ECO:0000255" key="3">
    <source>
        <dbReference type="PROSITE-ProRule" id="PRU00080"/>
    </source>
</evidence>
<evidence type="ECO:0000256" key="4">
    <source>
        <dbReference type="SAM" id="MobiDB-lite"/>
    </source>
</evidence>
<feature type="chain" id="PRO_0000249466" description="F-box/WD repeat-containing protein 9">
    <location>
        <begin position="1"/>
        <end position="458"/>
    </location>
</feature>
<feature type="domain" description="F-box" evidence="3">
    <location>
        <begin position="76"/>
        <end position="123"/>
    </location>
</feature>
<feature type="repeat" description="WD 1">
    <location>
        <begin position="171"/>
        <end position="210"/>
    </location>
</feature>
<feature type="repeat" description="WD 2">
    <location>
        <begin position="224"/>
        <end position="261"/>
    </location>
</feature>
<feature type="repeat" description="WD 3">
    <location>
        <begin position="264"/>
        <end position="301"/>
    </location>
</feature>
<feature type="repeat" description="WD 4">
    <location>
        <begin position="305"/>
        <end position="342"/>
    </location>
</feature>
<feature type="repeat" description="WD 5">
    <location>
        <begin position="344"/>
        <end position="381"/>
    </location>
</feature>
<feature type="repeat" description="WD 6">
    <location>
        <begin position="387"/>
        <end position="424"/>
    </location>
</feature>
<feature type="repeat" description="WD 7">
    <location>
        <begin position="427"/>
        <end position="458"/>
    </location>
</feature>
<feature type="region of interest" description="Disordered" evidence="4">
    <location>
        <begin position="1"/>
        <end position="28"/>
    </location>
</feature>
<feature type="compositionally biased region" description="Acidic residues" evidence="4">
    <location>
        <begin position="16"/>
        <end position="28"/>
    </location>
</feature>
<feature type="modified residue" description="N-acetylmethionine" evidence="2">
    <location>
        <position position="1"/>
    </location>
</feature>
<feature type="modified residue" description="Phosphoserine" evidence="2">
    <location>
        <position position="18"/>
    </location>
</feature>
<feature type="modified residue" description="Phosphoserine" evidence="2">
    <location>
        <position position="59"/>
    </location>
</feature>